<accession>A0M8U1</accession>
<name>ST7_CHICK</name>
<sequence length="554" mass="63415">MAEAGTGFLEQLKSCIVWSWTYLWTLWFFIMLFLVYILRVPLKINDNLTTVSMFLNTLTPKFYVALTGTSSLISGLILIFEWWYFRKYGTSFIEQVSVSHLRPLLGGVDNSAPSAANAANGEADSSRQSVSECKVWRNPLNLFRGAEYNRYTWVTGREPLTYYDMNLSAQDHQTFFTCDTDHLRPADAIMQKAWRERNPQARISAAHEALELNECATAYILLAEEEATTIVEAEKLFKQALKAGEGCYRRSQQLQHHGAQYEAQHRRDTNVLVYIKRRLAMCARKLGRTREAVKMMRDLMKEFPLLSMFNIHENLLEALLELQAYADVQAVLAKYDDISLPKSATICYTAALLKARAVSDKFSPEAASRRGLSTAEMNAVEAIHRAVEFNPHVPKYLLEMKSLILPPEHILKRGDSEAIAYAFFHLQHWKRVEGALNLLHCTWEGTFRMIPYPLEKGHLFYPYPICTETADRELLPSFHEVSVYPKKELPFFILFTAGLCSFTAMLALLTHQFPELMGVFAKAFLSTLFAPLNFVMEKVESILPSSLWHQLTRI</sequence>
<feature type="chain" id="PRO_0000339219" description="Suppressor of tumorigenicity 7 protein homolog">
    <location>
        <begin position="1"/>
        <end position="554"/>
    </location>
</feature>
<feature type="transmembrane region" description="Helical" evidence="1">
    <location>
        <begin position="15"/>
        <end position="35"/>
    </location>
</feature>
<feature type="transmembrane region" description="Helical" evidence="1">
    <location>
        <begin position="62"/>
        <end position="82"/>
    </location>
</feature>
<feature type="transmembrane region" description="Helical" evidence="1">
    <location>
        <begin position="489"/>
        <end position="509"/>
    </location>
</feature>
<feature type="transmembrane region" description="Helical" evidence="1">
    <location>
        <begin position="516"/>
        <end position="536"/>
    </location>
</feature>
<proteinExistence type="inferred from homology"/>
<organism>
    <name type="scientific">Gallus gallus</name>
    <name type="common">Chicken</name>
    <dbReference type="NCBI Taxonomy" id="9031"/>
    <lineage>
        <taxon>Eukaryota</taxon>
        <taxon>Metazoa</taxon>
        <taxon>Chordata</taxon>
        <taxon>Craniata</taxon>
        <taxon>Vertebrata</taxon>
        <taxon>Euteleostomi</taxon>
        <taxon>Archelosauria</taxon>
        <taxon>Archosauria</taxon>
        <taxon>Dinosauria</taxon>
        <taxon>Saurischia</taxon>
        <taxon>Theropoda</taxon>
        <taxon>Coelurosauria</taxon>
        <taxon>Aves</taxon>
        <taxon>Neognathae</taxon>
        <taxon>Galloanserae</taxon>
        <taxon>Galliformes</taxon>
        <taxon>Phasianidae</taxon>
        <taxon>Phasianinae</taxon>
        <taxon>Gallus</taxon>
    </lineage>
</organism>
<protein>
    <recommendedName>
        <fullName>Suppressor of tumorigenicity 7 protein homolog</fullName>
    </recommendedName>
</protein>
<reference key="1">
    <citation type="journal article" date="2003" name="Nature">
        <title>Comparative analyses of multi-species sequences from targeted genomic regions.</title>
        <authorList>
            <person name="Thomas J.W."/>
            <person name="Touchman J.W."/>
            <person name="Blakesley R.W."/>
            <person name="Bouffard G.G."/>
            <person name="Beckstrom-Sternberg S.M."/>
            <person name="Margulies E.H."/>
            <person name="Blanchette M."/>
            <person name="Siepel A.C."/>
            <person name="Thomas P.J."/>
            <person name="McDowell J.C."/>
            <person name="Maskeri B."/>
            <person name="Hansen N.F."/>
            <person name="Schwartz M.S."/>
            <person name="Weber R.J."/>
            <person name="Kent W.J."/>
            <person name="Karolchik D."/>
            <person name="Bruen T.C."/>
            <person name="Bevan R."/>
            <person name="Cutler D.J."/>
            <person name="Schwartz S."/>
            <person name="Elnitski L."/>
            <person name="Idol J.R."/>
            <person name="Prasad A.B."/>
            <person name="Lee-Lin S.-Q."/>
            <person name="Maduro V.V.B."/>
            <person name="Summers T.J."/>
            <person name="Portnoy M.E."/>
            <person name="Dietrich N.L."/>
            <person name="Akhter N."/>
            <person name="Ayele K."/>
            <person name="Benjamin B."/>
            <person name="Cariaga K."/>
            <person name="Brinkley C.P."/>
            <person name="Brooks S.Y."/>
            <person name="Granite S."/>
            <person name="Guan X."/>
            <person name="Gupta J."/>
            <person name="Haghighi P."/>
            <person name="Ho S.-L."/>
            <person name="Huang M.C."/>
            <person name="Karlins E."/>
            <person name="Laric P.L."/>
            <person name="Legaspi R."/>
            <person name="Lim M.J."/>
            <person name="Maduro Q.L."/>
            <person name="Masiello C.A."/>
            <person name="Mastrian S.D."/>
            <person name="McCloskey J.C."/>
            <person name="Pearson R."/>
            <person name="Stantripop S."/>
            <person name="Tiongson E.E."/>
            <person name="Tran J.T."/>
            <person name="Tsurgeon C."/>
            <person name="Vogt J.L."/>
            <person name="Walker M.A."/>
            <person name="Wetherby K.D."/>
            <person name="Wiggins L.S."/>
            <person name="Young A.C."/>
            <person name="Zhang L.-H."/>
            <person name="Osoegawa K."/>
            <person name="Zhu B."/>
            <person name="Zhao B."/>
            <person name="Shu C.L."/>
            <person name="De Jong P.J."/>
            <person name="Lawrence C.E."/>
            <person name="Smit A.F."/>
            <person name="Chakravarti A."/>
            <person name="Haussler D."/>
            <person name="Green P."/>
            <person name="Miller W."/>
            <person name="Green E.D."/>
        </authorList>
    </citation>
    <scope>NUCLEOTIDE SEQUENCE [LARGE SCALE GENOMIC DNA]</scope>
</reference>
<gene>
    <name type="primary">ST7</name>
</gene>
<evidence type="ECO:0000255" key="1"/>
<evidence type="ECO:0000305" key="2"/>
<comment type="subcellular location">
    <subcellularLocation>
        <location evidence="2">Membrane</location>
        <topology evidence="2">Multi-pass membrane protein</topology>
    </subcellularLocation>
</comment>
<comment type="similarity">
    <text evidence="2">Belongs to the ST7 family.</text>
</comment>
<dbReference type="EMBL" id="DP000235">
    <property type="protein sequence ID" value="AAR16244.2"/>
    <property type="molecule type" value="Genomic_DNA"/>
</dbReference>
<dbReference type="RefSeq" id="NP_001099142.1">
    <property type="nucleotide sequence ID" value="NM_001105672.1"/>
</dbReference>
<dbReference type="SMR" id="A0M8U1"/>
<dbReference type="FunCoup" id="A0M8U1">
    <property type="interactions" value="1743"/>
</dbReference>
<dbReference type="STRING" id="9031.ENSGALP00000045489"/>
<dbReference type="PaxDb" id="9031-ENSGALP00000015265"/>
<dbReference type="GeneID" id="417770"/>
<dbReference type="KEGG" id="gga:417770"/>
<dbReference type="CTD" id="7982"/>
<dbReference type="VEuPathDB" id="HostDB:geneid_417770"/>
<dbReference type="eggNOG" id="KOG3807">
    <property type="taxonomic scope" value="Eukaryota"/>
</dbReference>
<dbReference type="HOGENOM" id="CLU_035578_2_0_1"/>
<dbReference type="InParanoid" id="A0M8U1"/>
<dbReference type="OrthoDB" id="5914722at2759"/>
<dbReference type="PhylomeDB" id="A0M8U1"/>
<dbReference type="PRO" id="PR:A0M8U1"/>
<dbReference type="Proteomes" id="UP000000539">
    <property type="component" value="Chromosome 1"/>
</dbReference>
<dbReference type="Bgee" id="ENSGALG00000037206">
    <property type="expression patterns" value="Expressed in skeletal muscle tissue and 12 other cell types or tissues"/>
</dbReference>
<dbReference type="GO" id="GO:0016020">
    <property type="term" value="C:membrane"/>
    <property type="evidence" value="ECO:0007669"/>
    <property type="project" value="UniProtKB-SubCell"/>
</dbReference>
<dbReference type="CDD" id="cd11557">
    <property type="entry name" value="ST7"/>
    <property type="match status" value="1"/>
</dbReference>
<dbReference type="InterPro" id="IPR007311">
    <property type="entry name" value="ST7"/>
</dbReference>
<dbReference type="PANTHER" id="PTHR12745">
    <property type="entry name" value="SUPPRESSION OF TUMORIGENICITY 7"/>
    <property type="match status" value="1"/>
</dbReference>
<dbReference type="PANTHER" id="PTHR12745:SF8">
    <property type="entry name" value="SUPPRESSOR OF TUMORIGENICITY 7 PROTEIN"/>
    <property type="match status" value="1"/>
</dbReference>
<dbReference type="Pfam" id="PF04184">
    <property type="entry name" value="ST7"/>
    <property type="match status" value="1"/>
</dbReference>
<keyword id="KW-0472">Membrane</keyword>
<keyword id="KW-1185">Reference proteome</keyword>
<keyword id="KW-0812">Transmembrane</keyword>
<keyword id="KW-1133">Transmembrane helix</keyword>